<dbReference type="EMBL" id="AF041106">
    <property type="protein sequence ID" value="AAB97075.1"/>
    <property type="molecule type" value="mRNA"/>
</dbReference>
<dbReference type="EMBL" id="AF041107">
    <property type="protein sequence ID" value="AAB97076.1"/>
    <property type="status" value="ALT_FRAME"/>
    <property type="molecule type" value="mRNA"/>
</dbReference>
<dbReference type="EMBL" id="AABR06044125">
    <property type="status" value="NOT_ANNOTATED_CDS"/>
    <property type="molecule type" value="Genomic_DNA"/>
</dbReference>
<dbReference type="EMBL" id="AABR06044126">
    <property type="status" value="NOT_ANNOTATED_CDS"/>
    <property type="molecule type" value="Genomic_DNA"/>
</dbReference>
<dbReference type="EMBL" id="AABR06044127">
    <property type="status" value="NOT_ANNOTATED_CDS"/>
    <property type="molecule type" value="Genomic_DNA"/>
</dbReference>
<dbReference type="EMBL" id="AABR06044128">
    <property type="status" value="NOT_ANNOTATED_CDS"/>
    <property type="molecule type" value="Genomic_DNA"/>
</dbReference>
<dbReference type="EMBL" id="AABR06044129">
    <property type="status" value="NOT_ANNOTATED_CDS"/>
    <property type="molecule type" value="Genomic_DNA"/>
</dbReference>
<dbReference type="EMBL" id="AABR06044130">
    <property type="status" value="NOT_ANNOTATED_CDS"/>
    <property type="molecule type" value="Genomic_DNA"/>
</dbReference>
<dbReference type="EMBL" id="AABR06044131">
    <property type="status" value="NOT_ANNOTATED_CDS"/>
    <property type="molecule type" value="Genomic_DNA"/>
</dbReference>
<dbReference type="EMBL" id="AABR06044132">
    <property type="status" value="NOT_ANNOTATED_CDS"/>
    <property type="molecule type" value="Genomic_DNA"/>
</dbReference>
<dbReference type="EMBL" id="AABR06044133">
    <property type="status" value="NOT_ANNOTATED_CDS"/>
    <property type="molecule type" value="Genomic_DNA"/>
</dbReference>
<dbReference type="EMBL" id="AABR06044134">
    <property type="status" value="NOT_ANNOTATED_CDS"/>
    <property type="molecule type" value="Genomic_DNA"/>
</dbReference>
<dbReference type="EMBL" id="AABR06044135">
    <property type="status" value="NOT_ANNOTATED_CDS"/>
    <property type="molecule type" value="Genomic_DNA"/>
</dbReference>
<dbReference type="EMBL" id="AABR06044136">
    <property type="status" value="NOT_ANNOTATED_CDS"/>
    <property type="molecule type" value="Genomic_DNA"/>
</dbReference>
<dbReference type="EMBL" id="AABR06044137">
    <property type="status" value="NOT_ANNOTATED_CDS"/>
    <property type="molecule type" value="Genomic_DNA"/>
</dbReference>
<dbReference type="RefSeq" id="NP_064468.3">
    <property type="nucleotide sequence ID" value="NM_020083.3"/>
</dbReference>
<dbReference type="SMR" id="O55007"/>
<dbReference type="FunCoup" id="O55007">
    <property type="interactions" value="4305"/>
</dbReference>
<dbReference type="IntAct" id="O55007">
    <property type="interactions" value="2"/>
</dbReference>
<dbReference type="MINT" id="O55007"/>
<dbReference type="STRING" id="10116.ENSRNOP00000010824"/>
<dbReference type="iPTMnet" id="O55007"/>
<dbReference type="PhosphoSitePlus" id="O55007"/>
<dbReference type="PaxDb" id="10116-ENSRNOP00000059440"/>
<dbReference type="Ensembl" id="ENSRNOT00000065230.5">
    <molecule id="O55007-1"/>
    <property type="protein sequence ID" value="ENSRNOP00000059440.4"/>
    <property type="gene ID" value="ENSRNOG00000046256.4"/>
</dbReference>
<dbReference type="GeneID" id="56785"/>
<dbReference type="KEGG" id="rno:56785"/>
<dbReference type="UCSC" id="RGD:620642">
    <molecule id="O55007-4"/>
    <property type="organism name" value="rat"/>
</dbReference>
<dbReference type="AGR" id="RGD:620642"/>
<dbReference type="CTD" id="253959"/>
<dbReference type="RGD" id="620642">
    <property type="gene designation" value="Ralgapa1"/>
</dbReference>
<dbReference type="VEuPathDB" id="HostDB:ENSRNOG00000046256"/>
<dbReference type="eggNOG" id="KOG3686">
    <property type="taxonomic scope" value="Eukaryota"/>
</dbReference>
<dbReference type="GeneTree" id="ENSGT00950000183139"/>
<dbReference type="HOGENOM" id="CLU_001676_0_0_1"/>
<dbReference type="InParanoid" id="O55007"/>
<dbReference type="OrthoDB" id="19311at2759"/>
<dbReference type="Reactome" id="R-RNO-9013407">
    <property type="pathway name" value="RHOH GTPase cycle"/>
</dbReference>
<dbReference type="PRO" id="PR:O55007"/>
<dbReference type="Proteomes" id="UP000002494">
    <property type="component" value="Chromosome 6"/>
</dbReference>
<dbReference type="Bgee" id="ENSRNOG00000046256">
    <property type="expression patterns" value="Expressed in ovary and 20 other cell types or tissues"/>
</dbReference>
<dbReference type="ExpressionAtlas" id="O55007">
    <property type="expression patterns" value="baseline and differential"/>
</dbReference>
<dbReference type="GO" id="GO:0005737">
    <property type="term" value="C:cytoplasm"/>
    <property type="evidence" value="ECO:0000250"/>
    <property type="project" value="UniProtKB"/>
</dbReference>
<dbReference type="GO" id="GO:0005634">
    <property type="term" value="C:nucleus"/>
    <property type="evidence" value="ECO:0000250"/>
    <property type="project" value="UniProtKB"/>
</dbReference>
<dbReference type="GO" id="GO:0005096">
    <property type="term" value="F:GTPase activator activity"/>
    <property type="evidence" value="ECO:0000250"/>
    <property type="project" value="UniProtKB"/>
</dbReference>
<dbReference type="GO" id="GO:0046982">
    <property type="term" value="F:protein heterodimerization activity"/>
    <property type="evidence" value="ECO:0000266"/>
    <property type="project" value="RGD"/>
</dbReference>
<dbReference type="GO" id="GO:0090630">
    <property type="term" value="P:activation of GTPase activity"/>
    <property type="evidence" value="ECO:0000250"/>
    <property type="project" value="UniProtKB"/>
</dbReference>
<dbReference type="GO" id="GO:0000122">
    <property type="term" value="P:negative regulation of transcription by RNA polymerase II"/>
    <property type="evidence" value="ECO:0000266"/>
    <property type="project" value="RGD"/>
</dbReference>
<dbReference type="GO" id="GO:0051056">
    <property type="term" value="P:regulation of small GTPase mediated signal transduction"/>
    <property type="evidence" value="ECO:0007669"/>
    <property type="project" value="InterPro"/>
</dbReference>
<dbReference type="FunFam" id="3.40.50.11210:FF:000001">
    <property type="entry name" value="Ral GTPase-activating protein subunit alpha-1 isoform 1"/>
    <property type="match status" value="1"/>
</dbReference>
<dbReference type="Gene3D" id="3.40.50.11210">
    <property type="entry name" value="Rap/Ran-GAP"/>
    <property type="match status" value="1"/>
</dbReference>
<dbReference type="InterPro" id="IPR016024">
    <property type="entry name" value="ARM-type_fold"/>
</dbReference>
<dbReference type="InterPro" id="IPR035974">
    <property type="entry name" value="Rap/Ran-GAP_sf"/>
</dbReference>
<dbReference type="InterPro" id="IPR000331">
    <property type="entry name" value="Rap/Ran_GAP_dom"/>
</dbReference>
<dbReference type="InterPro" id="IPR046859">
    <property type="entry name" value="RGPA/RALGAPB_N"/>
</dbReference>
<dbReference type="InterPro" id="IPR027107">
    <property type="entry name" value="Tuberin/Ral-act_asu"/>
</dbReference>
<dbReference type="PANTHER" id="PTHR10063:SF3">
    <property type="entry name" value="RAL GTPASE-ACTIVATING PROTEIN SUBUNIT ALPHA-1"/>
    <property type="match status" value="1"/>
</dbReference>
<dbReference type="PANTHER" id="PTHR10063">
    <property type="entry name" value="TUBERIN"/>
    <property type="match status" value="1"/>
</dbReference>
<dbReference type="Pfam" id="PF20412">
    <property type="entry name" value="RALGAPB_N"/>
    <property type="match status" value="1"/>
</dbReference>
<dbReference type="Pfam" id="PF02145">
    <property type="entry name" value="Rap_GAP"/>
    <property type="match status" value="1"/>
</dbReference>
<dbReference type="SUPFAM" id="SSF48371">
    <property type="entry name" value="ARM repeat"/>
    <property type="match status" value="1"/>
</dbReference>
<dbReference type="SUPFAM" id="SSF111347">
    <property type="entry name" value="Rap/Ran-GAP"/>
    <property type="match status" value="1"/>
</dbReference>
<dbReference type="PROSITE" id="PS50085">
    <property type="entry name" value="RAPGAP"/>
    <property type="match status" value="1"/>
</dbReference>
<reference key="1">
    <citation type="submission" date="1998-01" db="EMBL/GenBank/DDBJ databases">
        <title>Tuberin-like proteins identified through the yeast two-hybrid screening using rat lin-10 as a bait.</title>
        <authorList>
            <person name="Hirao K."/>
            <person name="Hata Y."/>
            <person name="Takai Y."/>
        </authorList>
    </citation>
    <scope>NUCLEOTIDE SEQUENCE [MRNA] (ISOFORMS 1 AND 2)</scope>
</reference>
<reference key="2">
    <citation type="journal article" date="2004" name="Nature">
        <title>Genome sequence of the Brown Norway rat yields insights into mammalian evolution.</title>
        <authorList>
            <person name="Gibbs R.A."/>
            <person name="Weinstock G.M."/>
            <person name="Metzker M.L."/>
            <person name="Muzny D.M."/>
            <person name="Sodergren E.J."/>
            <person name="Scherer S."/>
            <person name="Scott G."/>
            <person name="Steffen D."/>
            <person name="Worley K.C."/>
            <person name="Burch P.E."/>
            <person name="Okwuonu G."/>
            <person name="Hines S."/>
            <person name="Lewis L."/>
            <person name="Deramo C."/>
            <person name="Delgado O."/>
            <person name="Dugan-Rocha S."/>
            <person name="Miner G."/>
            <person name="Morgan M."/>
            <person name="Hawes A."/>
            <person name="Gill R."/>
            <person name="Holt R.A."/>
            <person name="Adams M.D."/>
            <person name="Amanatides P.G."/>
            <person name="Baden-Tillson H."/>
            <person name="Barnstead M."/>
            <person name="Chin S."/>
            <person name="Evans C.A."/>
            <person name="Ferriera S."/>
            <person name="Fosler C."/>
            <person name="Glodek A."/>
            <person name="Gu Z."/>
            <person name="Jennings D."/>
            <person name="Kraft C.L."/>
            <person name="Nguyen T."/>
            <person name="Pfannkoch C.M."/>
            <person name="Sitter C."/>
            <person name="Sutton G.G."/>
            <person name="Venter J.C."/>
            <person name="Woodage T."/>
            <person name="Smith D."/>
            <person name="Lee H.-M."/>
            <person name="Gustafson E."/>
            <person name="Cahill P."/>
            <person name="Kana A."/>
            <person name="Doucette-Stamm L."/>
            <person name="Weinstock K."/>
            <person name="Fechtel K."/>
            <person name="Weiss R.B."/>
            <person name="Dunn D.M."/>
            <person name="Green E.D."/>
            <person name="Blakesley R.W."/>
            <person name="Bouffard G.G."/>
            <person name="De Jong P.J."/>
            <person name="Osoegawa K."/>
            <person name="Zhu B."/>
            <person name="Marra M."/>
            <person name="Schein J."/>
            <person name="Bosdet I."/>
            <person name="Fjell C."/>
            <person name="Jones S."/>
            <person name="Krzywinski M."/>
            <person name="Mathewson C."/>
            <person name="Siddiqui A."/>
            <person name="Wye N."/>
            <person name="McPherson J."/>
            <person name="Zhao S."/>
            <person name="Fraser C.M."/>
            <person name="Shetty J."/>
            <person name="Shatsman S."/>
            <person name="Geer K."/>
            <person name="Chen Y."/>
            <person name="Abramzon S."/>
            <person name="Nierman W.C."/>
            <person name="Havlak P.H."/>
            <person name="Chen R."/>
            <person name="Durbin K.J."/>
            <person name="Egan A."/>
            <person name="Ren Y."/>
            <person name="Song X.-Z."/>
            <person name="Li B."/>
            <person name="Liu Y."/>
            <person name="Qin X."/>
            <person name="Cawley S."/>
            <person name="Cooney A.J."/>
            <person name="D'Souza L.M."/>
            <person name="Martin K."/>
            <person name="Wu J.Q."/>
            <person name="Gonzalez-Garay M.L."/>
            <person name="Jackson A.R."/>
            <person name="Kalafus K.J."/>
            <person name="McLeod M.P."/>
            <person name="Milosavljevic A."/>
            <person name="Virk D."/>
            <person name="Volkov A."/>
            <person name="Wheeler D.A."/>
            <person name="Zhang Z."/>
            <person name="Bailey J.A."/>
            <person name="Eichler E.E."/>
            <person name="Tuzun E."/>
            <person name="Birney E."/>
            <person name="Mongin E."/>
            <person name="Ureta-Vidal A."/>
            <person name="Woodwark C."/>
            <person name="Zdobnov E."/>
            <person name="Bork P."/>
            <person name="Suyama M."/>
            <person name="Torrents D."/>
            <person name="Alexandersson M."/>
            <person name="Trask B.J."/>
            <person name="Young J.M."/>
            <person name="Huang H."/>
            <person name="Wang H."/>
            <person name="Xing H."/>
            <person name="Daniels S."/>
            <person name="Gietzen D."/>
            <person name="Schmidt J."/>
            <person name="Stevens K."/>
            <person name="Vitt U."/>
            <person name="Wingrove J."/>
            <person name="Camara F."/>
            <person name="Mar Alba M."/>
            <person name="Abril J.F."/>
            <person name="Guigo R."/>
            <person name="Smit A."/>
            <person name="Dubchak I."/>
            <person name="Rubin E.M."/>
            <person name="Couronne O."/>
            <person name="Poliakov A."/>
            <person name="Huebner N."/>
            <person name="Ganten D."/>
            <person name="Goesele C."/>
            <person name="Hummel O."/>
            <person name="Kreitler T."/>
            <person name="Lee Y.-A."/>
            <person name="Monti J."/>
            <person name="Schulz H."/>
            <person name="Zimdahl H."/>
            <person name="Himmelbauer H."/>
            <person name="Lehrach H."/>
            <person name="Jacob H.J."/>
            <person name="Bromberg S."/>
            <person name="Gullings-Handley J."/>
            <person name="Jensen-Seaman M.I."/>
            <person name="Kwitek A.E."/>
            <person name="Lazar J."/>
            <person name="Pasko D."/>
            <person name="Tonellato P.J."/>
            <person name="Twigger S."/>
            <person name="Ponting C.P."/>
            <person name="Duarte J.M."/>
            <person name="Rice S."/>
            <person name="Goodstadt L."/>
            <person name="Beatson S.A."/>
            <person name="Emes R.D."/>
            <person name="Winter E.E."/>
            <person name="Webber C."/>
            <person name="Brandt P."/>
            <person name="Nyakatura G."/>
            <person name="Adetobi M."/>
            <person name="Chiaromonte F."/>
            <person name="Elnitski L."/>
            <person name="Eswara P."/>
            <person name="Hardison R.C."/>
            <person name="Hou M."/>
            <person name="Kolbe D."/>
            <person name="Makova K."/>
            <person name="Miller W."/>
            <person name="Nekrutenko A."/>
            <person name="Riemer C."/>
            <person name="Schwartz S."/>
            <person name="Taylor J."/>
            <person name="Yang S."/>
            <person name="Zhang Y."/>
            <person name="Lindpaintner K."/>
            <person name="Andrews T.D."/>
            <person name="Caccamo M."/>
            <person name="Clamp M."/>
            <person name="Clarke L."/>
            <person name="Curwen V."/>
            <person name="Durbin R.M."/>
            <person name="Eyras E."/>
            <person name="Searle S.M."/>
            <person name="Cooper G.M."/>
            <person name="Batzoglou S."/>
            <person name="Brudno M."/>
            <person name="Sidow A."/>
            <person name="Stone E.A."/>
            <person name="Payseur B.A."/>
            <person name="Bourque G."/>
            <person name="Lopez-Otin C."/>
            <person name="Puente X.S."/>
            <person name="Chakrabarti K."/>
            <person name="Chatterji S."/>
            <person name="Dewey C."/>
            <person name="Pachter L."/>
            <person name="Bray N."/>
            <person name="Yap V.B."/>
            <person name="Caspi A."/>
            <person name="Tesler G."/>
            <person name="Pevzner P.A."/>
            <person name="Haussler D."/>
            <person name="Roskin K.M."/>
            <person name="Baertsch R."/>
            <person name="Clawson H."/>
            <person name="Furey T.S."/>
            <person name="Hinrichs A.S."/>
            <person name="Karolchik D."/>
            <person name="Kent W.J."/>
            <person name="Rosenbloom K.R."/>
            <person name="Trumbower H."/>
            <person name="Weirauch M."/>
            <person name="Cooper D.N."/>
            <person name="Stenson P.D."/>
            <person name="Ma B."/>
            <person name="Brent M."/>
            <person name="Arumugam M."/>
            <person name="Shteynberg D."/>
            <person name="Copley R.R."/>
            <person name="Taylor M.S."/>
            <person name="Riethman H."/>
            <person name="Mudunuri U."/>
            <person name="Peterson J."/>
            <person name="Guyer M."/>
            <person name="Felsenfeld A."/>
            <person name="Old S."/>
            <person name="Mockrin S."/>
            <person name="Collins F.S."/>
        </authorList>
    </citation>
    <scope>NUCLEOTIDE SEQUENCE [LARGE SCALE GENOMIC DNA]</scope>
    <source>
        <strain>Brown Norway</strain>
    </source>
</reference>
<reference key="3">
    <citation type="journal article" date="2009" name="J. Biol. Chem.">
        <title>Tuberous sclerosis tumor suppressor complex-like complexes act as GTPase-activating proteins for Ral GTPases.</title>
        <authorList>
            <person name="Shirakawa R."/>
            <person name="Fukai S."/>
            <person name="Kawato M."/>
            <person name="Higashi T."/>
            <person name="Kondo H."/>
            <person name="Ikeda T."/>
            <person name="Nakayama E."/>
            <person name="Okawa K."/>
            <person name="Nureki O."/>
            <person name="Kimura T."/>
            <person name="Kita T."/>
            <person name="Horiuchi H."/>
        </authorList>
    </citation>
    <scope>TISSUE SPECIFICITY</scope>
</reference>
<reference key="4">
    <citation type="journal article" date="2012" name="Nat. Commun.">
        <title>Quantitative maps of protein phosphorylation sites across 14 different rat organs and tissues.</title>
        <authorList>
            <person name="Lundby A."/>
            <person name="Secher A."/>
            <person name="Lage K."/>
            <person name="Nordsborg N.B."/>
            <person name="Dmytriyev A."/>
            <person name="Lundby C."/>
            <person name="Olsen J.V."/>
        </authorList>
    </citation>
    <scope>PHOSPHORYLATION [LARGE SCALE ANALYSIS] AT SER-796; SER-859; SER-860; SER-863; SER-999; THR-1001; SER-1003 AND SER-1477</scope>
    <scope>IDENTIFICATION BY MASS SPECTROMETRY [LARGE SCALE ANALYSIS]</scope>
</reference>
<gene>
    <name type="primary">Ralgapa1</name>
    <name type="synonym">Garnl1</name>
    <name type="synonym">Tulip1</name>
</gene>
<accession>O55007</accession>
<accession>F1LSW3</accession>
<accession>O55008</accession>
<feature type="chain" id="PRO_0000056755" description="Ral GTPase-activating protein subunit alpha-1">
    <location>
        <begin position="1"/>
        <end position="2035"/>
    </location>
</feature>
<feature type="domain" description="Rap-GAP" evidence="5">
    <location>
        <begin position="1795"/>
        <end position="2003"/>
    </location>
</feature>
<feature type="region of interest" description="Disordered" evidence="6">
    <location>
        <begin position="343"/>
        <end position="384"/>
    </location>
</feature>
<feature type="region of interest" description="Disordered" evidence="6">
    <location>
        <begin position="714"/>
        <end position="754"/>
    </location>
</feature>
<feature type="region of interest" description="Disordered" evidence="6">
    <location>
        <begin position="807"/>
        <end position="834"/>
    </location>
</feature>
<feature type="region of interest" description="Disordered" evidence="6">
    <location>
        <begin position="848"/>
        <end position="911"/>
    </location>
</feature>
<feature type="region of interest" description="Disordered" evidence="6">
    <location>
        <begin position="986"/>
        <end position="1008"/>
    </location>
</feature>
<feature type="region of interest" description="Minimal domain that binds to TCF3/E12" evidence="2">
    <location>
        <begin position="1326"/>
        <end position="2034"/>
    </location>
</feature>
<feature type="coiled-coil region" evidence="4">
    <location>
        <begin position="1713"/>
        <end position="1746"/>
    </location>
</feature>
<feature type="compositionally biased region" description="Basic and acidic residues" evidence="6">
    <location>
        <begin position="345"/>
        <end position="365"/>
    </location>
</feature>
<feature type="compositionally biased region" description="Polar residues" evidence="6">
    <location>
        <begin position="366"/>
        <end position="384"/>
    </location>
</feature>
<feature type="compositionally biased region" description="Basic and acidic residues" evidence="6">
    <location>
        <begin position="807"/>
        <end position="817"/>
    </location>
</feature>
<feature type="compositionally biased region" description="Polar residues" evidence="6">
    <location>
        <begin position="824"/>
        <end position="833"/>
    </location>
</feature>
<feature type="compositionally biased region" description="Polar residues" evidence="6">
    <location>
        <begin position="849"/>
        <end position="862"/>
    </location>
</feature>
<feature type="compositionally biased region" description="Low complexity" evidence="6">
    <location>
        <begin position="894"/>
        <end position="911"/>
    </location>
</feature>
<feature type="modified residue" description="Phosphoserine" evidence="3">
    <location>
        <position position="710"/>
    </location>
</feature>
<feature type="modified residue" description="Phosphoserine" evidence="3">
    <location>
        <position position="720"/>
    </location>
</feature>
<feature type="modified residue" description="Phosphothreonine" evidence="3">
    <location>
        <position position="753"/>
    </location>
</feature>
<feature type="modified residue" description="Phosphoserine" evidence="3">
    <location>
        <position position="772"/>
    </location>
</feature>
<feature type="modified residue" description="Phosphothreonine" evidence="3">
    <location>
        <position position="777"/>
    </location>
</feature>
<feature type="modified residue" description="Phosphoserine" evidence="10">
    <location>
        <position position="796"/>
    </location>
</feature>
<feature type="modified residue" description="Phosphoserine" evidence="10">
    <location>
        <position position="859"/>
    </location>
</feature>
<feature type="modified residue" description="Phosphoserine" evidence="10">
    <location>
        <position position="860"/>
    </location>
</feature>
<feature type="modified residue" description="Phosphoserine" evidence="10">
    <location>
        <position position="863"/>
    </location>
</feature>
<feature type="modified residue" description="Phosphoserine" evidence="3">
    <location>
        <position position="985"/>
    </location>
</feature>
<feature type="modified residue" description="Phosphoserine" evidence="3">
    <location>
        <position position="989"/>
    </location>
</feature>
<feature type="modified residue" description="Phosphoserine" evidence="3">
    <location>
        <position position="993"/>
    </location>
</feature>
<feature type="modified residue" description="Phosphoserine" evidence="10">
    <location>
        <position position="999"/>
    </location>
</feature>
<feature type="modified residue" description="Phosphothreonine" evidence="10">
    <location>
        <position position="1001"/>
    </location>
</feature>
<feature type="modified residue" description="Phosphoserine" evidence="10">
    <location>
        <position position="1003"/>
    </location>
</feature>
<feature type="modified residue" description="Phosphoserine" evidence="10">
    <location>
        <position position="1477"/>
    </location>
</feature>
<feature type="splice variant" id="VSP_056779" description="In isoform 1." evidence="8">
    <location>
        <begin position="1"/>
        <end position="1174"/>
    </location>
</feature>
<feature type="splice variant" id="VSP_056780" description="In isoform 2." evidence="9">
    <location>
        <begin position="1"/>
        <end position="1134"/>
    </location>
</feature>
<feature type="splice variant" id="VSP_056781" description="In isoform 1." evidence="8">
    <original>LRHLGNDEVHIVWSEHTRDYRRGII</original>
    <variation>INWRIALSFSIKDSVGILMGIPLTL</variation>
    <location>
        <begin position="1897"/>
        <end position="1921"/>
    </location>
</feature>
<feature type="splice variant" id="VSP_056782" description="In isoform 1." evidence="8">
    <location>
        <begin position="1922"/>
        <end position="2035"/>
    </location>
</feature>
<feature type="splice variant" id="VSP_056783" description="In isoform 2." evidence="9">
    <original>DH</original>
    <variation>GKNKREC</variation>
    <location>
        <begin position="2034"/>
        <end position="2035"/>
    </location>
</feature>
<feature type="sequence conflict" description="In Ref. 1; AAB97076." ref="1">
    <original>L</original>
    <variation>F</variation>
    <location>
        <position position="1150"/>
    </location>
</feature>
<feature type="sequence conflict" description="In Ref. 1; AAB97076." ref="1">
    <original>L</original>
    <variation>I</variation>
    <location>
        <position position="1406"/>
    </location>
</feature>
<feature type="sequence conflict" description="In Ref. 1; AAB97075/AAB97076." ref="1">
    <original>G</original>
    <variation>R</variation>
    <location>
        <position position="1688"/>
    </location>
</feature>
<feature type="sequence conflict" description="In Ref. 1; AAB97076." ref="1">
    <original>S</original>
    <variation>N</variation>
    <location>
        <position position="1691"/>
    </location>
</feature>
<feature type="sequence conflict" description="In Ref. 1; AAB97076." ref="1">
    <original>L</original>
    <variation>F</variation>
    <location>
        <position position="1992"/>
    </location>
</feature>
<organism>
    <name type="scientific">Rattus norvegicus</name>
    <name type="common">Rat</name>
    <dbReference type="NCBI Taxonomy" id="10116"/>
    <lineage>
        <taxon>Eukaryota</taxon>
        <taxon>Metazoa</taxon>
        <taxon>Chordata</taxon>
        <taxon>Craniata</taxon>
        <taxon>Vertebrata</taxon>
        <taxon>Euteleostomi</taxon>
        <taxon>Mammalia</taxon>
        <taxon>Eutheria</taxon>
        <taxon>Euarchontoglires</taxon>
        <taxon>Glires</taxon>
        <taxon>Rodentia</taxon>
        <taxon>Myomorpha</taxon>
        <taxon>Muroidea</taxon>
        <taxon>Muridae</taxon>
        <taxon>Murinae</taxon>
        <taxon>Rattus</taxon>
    </lineage>
</organism>
<keyword id="KW-0025">Alternative splicing</keyword>
<keyword id="KW-0175">Coiled coil</keyword>
<keyword id="KW-0963">Cytoplasm</keyword>
<keyword id="KW-0343">GTPase activation</keyword>
<keyword id="KW-0539">Nucleus</keyword>
<keyword id="KW-0597">Phosphoprotein</keyword>
<keyword id="KW-1185">Reference proteome</keyword>
<sequence length="2035" mass="229447">MFSKKPHGDVKKSTQKVLDTKKDALTRLKHLRIVIENADSIDLKQFFDQHFSHIYYVFFENFVTIEASLKQKGHKSQREELDAILFIFEKILQLLPERIHQRWQFHSIGLILKKLLHTGNSLKIRREGVRLFLLWLQALQDNCSKEQLWMFSCLIPGFSAPQSEYGPRTLDNLINPPLNLQETQVTIEEVTPLVPPQSGDKGQEDLTSYFLEALLKYIVIQVKSLEWKNKENQERGFSFLFSHFKKFYLPYIFPNLCKENSLYHPVLDIPQVRPKPHYVMVKKDAETNETIYCTKEPFIQARVIVIRWLVSFWLEPKPHSGPNIPGMEGEVLPKNIQRAAASLVSREESKNDTVDKADKTAEPEQSHSNTSTLTEREPSSSSLCSIDEEHLTDIEIVRRVFSSKRSNVNFVTEIFRQAFLLPICEAAAMRKVVKVYQEWIQQEGKPLFMQEPEETVITSSDIPCSENVTDHDISIEDGEKREEENGTNISEHVRNSTWTKNGSYQEAFHVSEEATEQNIQAGTQAVLQVFIINSSNIFLLEPANEIKNLLDEHTDMCKRILNIYRYMVVQVSMDKKTWEQMLLVLLRVTESVLKMSSQAFLQFQGKKNMTLAGRLAGPLFQTLIVAWIKANLNVYISRELWDDLLSVLSSLTYWEELATEWSLTMETLTKVLARNLYSLDLSDLPLDKLSEQKQKKHKGKGVGHEFQKVSVDKSFSRGWSRDQPGQAPMRQRSATTTGSPGTEKARSIVRQKTVDIDDSQILPRSTRVRHFSQSEDTGNEVFGALHEEQPLPRSSSTSDILEPFTVERAKVNKEDTSPKLPPLNSETGGSSANVPDLMDEFIAERLRSGNASTMTRRGSSPGSLEIPKDLPDILNKQNQMRPVDDPGVPSEWTSPASAGSSDLMSSDSHSDSFSAFQCEGRKFDNFGFGTDIGIPSSADVDSGSGHHQSTEEQEVASLTTLHLDSETSSLNQQAFSAEVATVTGSESASPVHSALGSRSQTPSPSTLNIDHMEQKDLQLDEKLHHSVLQTPDDLEISEFPSECCSVMAGGTLTGWHADVATVMWRRMLGILGDVNAIMDPEIHAQVFDYLCELWQNLAKIRDNLGISADNLTSPSPPVLIPPLRILTPWLFKATMLTDKYKQGKLHAYKLICNTMKRRQDVSPNRDFLTHFYNIMHCGLLHIDQDIVNTIIKHCSPQFFSLGLPGATMLIMDFIIAAGRVASSAFLNAPRVEAQVLLGSLVCFPNLYCELPALHPSTPDIAVSQFTDVKELIIKTVLSSARDEPSGPARCVALCSLGIWICEELVHESHHPQIKEALNVICVSLKFTNKTVAHVACNMLHMLVHYAPRLQTYQPDSPLKIIQILIATITHLLPSTEASSYEMDKRLVVSLLLCLLDWIMALPLKTLLQSVHSTGAENEKTEKSVLNCIYKVLHGCVYGAQSFSHPKYFPISLSDLASVDYDPFMHLESLREPEPLHSPDSERSSKLQPVTEVKTQMQQGLISIAARTVITHLVNHLGHYPMSGGPAMLTSQVCENHDNHYSESTELSPELFDSPNIQFFVLNNTTLVSCIQIRSEESVPGGGLAAGLVSANSNVRIIVRDLSGKYSWDSAILYGPPIVSGLPEPTSFILSMSYQEKPEEPPTSNECLEDITVKDGLSLQLRRFRETVPTWSTIREEEDVLDELLQYLGTTSPECLQRTGISLNVPAPQPVCISEKQENDVINAILKQYTEEKEFVEKHFNDLNMKASEQDEPTPQKPQSAFYYCRLLLSILGMNSWDKRRSFHLLKKNEKLLRELRNLDSRQCRETHKIAVFYVAEGQEDKYSILTNIGGSQAYEDFVAGLGWEVNLTNHCGFMGGLQKNKSTGLTTPYFATSTVEVIFHVSTRMPSESDDSLTKKLRHLGNDEVHIVWSEHTRDYRRGIIPTEFGDVLIVIYPMKNHMFSIQIMKKPEVPFFGPLFDGAIVNGKVLPIMVRSTAINASRALKSLIPLYQNLYEERARYLQTIVQHHLEPTTFEDFAAQVFSPAPYHHFPADADH</sequence>
<name>RGPA1_RAT</name>
<comment type="function">
    <text evidence="1">Catalytic subunit of the heterodimeric RalGAP1 complex which acts as a GTPase activator for the Ras-like small GTPases RALA and RALB.</text>
</comment>
<comment type="subunit">
    <text evidence="1">Component of the heterodimeric RalGAP1 complex with RALGAPB. Heterodimerization is required for activity. Interacts with the HLH region of TCF3/isoform E12 (By similarity).</text>
</comment>
<comment type="subcellular location">
    <subcellularLocation>
        <location evidence="1">Cytoplasm</location>
    </subcellularLocation>
    <subcellularLocation>
        <location evidence="1">Nucleus</location>
    </subcellularLocation>
    <text evidence="1">Translocated to the nucleus, when associated with TCF3/E12.</text>
</comment>
<comment type="alternative products">
    <event type="alternative splicing"/>
    <isoform>
        <id>O55007-4</id>
        <name>3</name>
        <sequence type="displayed"/>
    </isoform>
    <isoform>
        <id>O55007-3</id>
        <name>2</name>
        <name>Tulip 2</name>
        <sequence type="described" ref="VSP_056780 VSP_056783"/>
    </isoform>
    <isoform>
        <id>O55007-1</id>
        <name>1</name>
        <name>Tulip 1</name>
        <sequence type="described" ref="VSP_056779 VSP_056781 VSP_056782"/>
    </isoform>
</comment>
<comment type="tissue specificity">
    <text evidence="7">Highly expressed in brain, thymus and testis with lower levels in lung and spleen and barely detectable in heart or liver (at protein level).</text>
</comment>
<comment type="sequence caution" evidence="9">
    <conflict type="frameshift">
        <sequence resource="EMBL-CDS" id="AAB97076"/>
    </conflict>
</comment>
<evidence type="ECO:0000250" key="1"/>
<evidence type="ECO:0000250" key="2">
    <source>
        <dbReference type="UniProtKB" id="Q6GYP7"/>
    </source>
</evidence>
<evidence type="ECO:0000250" key="3">
    <source>
        <dbReference type="UniProtKB" id="Q6GYQ0"/>
    </source>
</evidence>
<evidence type="ECO:0000255" key="4"/>
<evidence type="ECO:0000255" key="5">
    <source>
        <dbReference type="PROSITE-ProRule" id="PRU00165"/>
    </source>
</evidence>
<evidence type="ECO:0000256" key="6">
    <source>
        <dbReference type="SAM" id="MobiDB-lite"/>
    </source>
</evidence>
<evidence type="ECO:0000269" key="7">
    <source>
    </source>
</evidence>
<evidence type="ECO:0000303" key="8">
    <source ref="1"/>
</evidence>
<evidence type="ECO:0000305" key="9"/>
<evidence type="ECO:0007744" key="10">
    <source>
    </source>
</evidence>
<proteinExistence type="evidence at protein level"/>
<protein>
    <recommendedName>
        <fullName>Ral GTPase-activating protein subunit alpha-1</fullName>
    </recommendedName>
    <alternativeName>
        <fullName>GAP-related-interacting partner to E12</fullName>
        <shortName>GRIPE</shortName>
    </alternativeName>
    <alternativeName>
        <fullName>GTPase-activating RapGAP domain-like 1</fullName>
    </alternativeName>
    <alternativeName>
        <fullName>Tuberin-like protein 1</fullName>
    </alternativeName>
    <alternativeName>
        <fullName>p240</fullName>
    </alternativeName>
</protein>